<name>SIR7_BOVIN</name>
<dbReference type="EC" id="2.3.1.286" evidence="4"/>
<dbReference type="EC" id="2.3.1.-" evidence="2"/>
<dbReference type="EMBL" id="BC120328">
    <property type="protein sequence ID" value="AAI20329.1"/>
    <property type="molecule type" value="mRNA"/>
</dbReference>
<dbReference type="RefSeq" id="NP_001068685.1">
    <property type="nucleotide sequence ID" value="NM_001075217.1"/>
</dbReference>
<dbReference type="SMR" id="Q0P595"/>
<dbReference type="FunCoup" id="Q0P595">
    <property type="interactions" value="1095"/>
</dbReference>
<dbReference type="STRING" id="9913.ENSBTAP00000000043"/>
<dbReference type="PaxDb" id="9913-ENSBTAP00000000043"/>
<dbReference type="Ensembl" id="ENSBTAT00000000043.6">
    <property type="protein sequence ID" value="ENSBTAP00000000043.4"/>
    <property type="gene ID" value="ENSBTAG00000000039.6"/>
</dbReference>
<dbReference type="GeneID" id="505662"/>
<dbReference type="KEGG" id="bta:505662"/>
<dbReference type="CTD" id="51547"/>
<dbReference type="VEuPathDB" id="HostDB:ENSBTAG00000000039"/>
<dbReference type="VGNC" id="VGNC:34636">
    <property type="gene designation" value="SIRT7"/>
</dbReference>
<dbReference type="eggNOG" id="KOG1905">
    <property type="taxonomic scope" value="Eukaryota"/>
</dbReference>
<dbReference type="GeneTree" id="ENSGT00940000159703"/>
<dbReference type="HOGENOM" id="CLU_023643_6_2_1"/>
<dbReference type="InParanoid" id="Q0P595"/>
<dbReference type="OMA" id="SNREYCK"/>
<dbReference type="OrthoDB" id="2919105at2759"/>
<dbReference type="TreeFam" id="TF106184"/>
<dbReference type="Proteomes" id="UP000009136">
    <property type="component" value="Chromosome 19"/>
</dbReference>
<dbReference type="Bgee" id="ENSBTAG00000000039">
    <property type="expression patterns" value="Expressed in thymus and 104 other cell types or tissues"/>
</dbReference>
<dbReference type="GO" id="GO:0000785">
    <property type="term" value="C:chromatin"/>
    <property type="evidence" value="ECO:0000250"/>
    <property type="project" value="UniProtKB"/>
</dbReference>
<dbReference type="GO" id="GO:0005737">
    <property type="term" value="C:cytoplasm"/>
    <property type="evidence" value="ECO:0007669"/>
    <property type="project" value="UniProtKB-SubCell"/>
</dbReference>
<dbReference type="GO" id="GO:0005730">
    <property type="term" value="C:nucleolus"/>
    <property type="evidence" value="ECO:0000250"/>
    <property type="project" value="UniProtKB"/>
</dbReference>
<dbReference type="GO" id="GO:0005731">
    <property type="term" value="C:nucleolus organizer region"/>
    <property type="evidence" value="ECO:0000250"/>
    <property type="project" value="UniProtKB"/>
</dbReference>
<dbReference type="GO" id="GO:0005654">
    <property type="term" value="C:nucleoplasm"/>
    <property type="evidence" value="ECO:0007669"/>
    <property type="project" value="UniProtKB-SubCell"/>
</dbReference>
<dbReference type="GO" id="GO:0005634">
    <property type="term" value="C:nucleus"/>
    <property type="evidence" value="ECO:0000318"/>
    <property type="project" value="GO_Central"/>
</dbReference>
<dbReference type="GO" id="GO:0035861">
    <property type="term" value="C:site of double-strand break"/>
    <property type="evidence" value="ECO:0000250"/>
    <property type="project" value="UniProtKB"/>
</dbReference>
<dbReference type="GO" id="GO:0003682">
    <property type="term" value="F:chromatin binding"/>
    <property type="evidence" value="ECO:0000250"/>
    <property type="project" value="UniProtKB"/>
</dbReference>
<dbReference type="GO" id="GO:0097372">
    <property type="term" value="F:histone H3K18 deacetylase activity, NAD-dependent"/>
    <property type="evidence" value="ECO:0000250"/>
    <property type="project" value="UniProtKB"/>
</dbReference>
<dbReference type="GO" id="GO:0046872">
    <property type="term" value="F:metal ion binding"/>
    <property type="evidence" value="ECO:0007669"/>
    <property type="project" value="UniProtKB-KW"/>
</dbReference>
<dbReference type="GO" id="GO:0070403">
    <property type="term" value="F:NAD+ binding"/>
    <property type="evidence" value="ECO:0000318"/>
    <property type="project" value="GO_Central"/>
</dbReference>
<dbReference type="GO" id="GO:0034979">
    <property type="term" value="F:NAD-dependent protein lysine deacetylase activity"/>
    <property type="evidence" value="ECO:0000250"/>
    <property type="project" value="UniProtKB"/>
</dbReference>
<dbReference type="GO" id="GO:0106231">
    <property type="term" value="F:NAD-dependent protein-lysine depropionylase activity"/>
    <property type="evidence" value="ECO:0000250"/>
    <property type="project" value="UniProtKB"/>
</dbReference>
<dbReference type="GO" id="GO:0061697">
    <property type="term" value="F:protein-glutaryllysine deglutarylase activity"/>
    <property type="evidence" value="ECO:0000250"/>
    <property type="project" value="UniProtKB"/>
</dbReference>
<dbReference type="GO" id="GO:0036055">
    <property type="term" value="F:protein-succinyllysine desuccinylase activity"/>
    <property type="evidence" value="ECO:0000250"/>
    <property type="project" value="UniProtKB"/>
</dbReference>
<dbReference type="GO" id="GO:0006281">
    <property type="term" value="P:DNA repair"/>
    <property type="evidence" value="ECO:0007669"/>
    <property type="project" value="UniProtKB-KW"/>
</dbReference>
<dbReference type="GO" id="GO:0140861">
    <property type="term" value="P:DNA repair-dependent chromatin remodeling"/>
    <property type="evidence" value="ECO:0000250"/>
    <property type="project" value="UniProtKB"/>
</dbReference>
<dbReference type="GO" id="GO:0007129">
    <property type="term" value="P:homologous chromosome pairing at meiosis"/>
    <property type="evidence" value="ECO:0000250"/>
    <property type="project" value="UniProtKB"/>
</dbReference>
<dbReference type="GO" id="GO:0031397">
    <property type="term" value="P:negative regulation of protein ubiquitination"/>
    <property type="evidence" value="ECO:0000250"/>
    <property type="project" value="UniProtKB"/>
</dbReference>
<dbReference type="GO" id="GO:0000122">
    <property type="term" value="P:negative regulation of transcription by RNA polymerase II"/>
    <property type="evidence" value="ECO:0000250"/>
    <property type="project" value="UniProtKB"/>
</dbReference>
<dbReference type="GO" id="GO:0001649">
    <property type="term" value="P:osteoblast differentiation"/>
    <property type="evidence" value="ECO:0000250"/>
    <property type="project" value="UniProtKB"/>
</dbReference>
<dbReference type="GO" id="GO:0045722">
    <property type="term" value="P:positive regulation of gluconeogenesis"/>
    <property type="evidence" value="ECO:0000250"/>
    <property type="project" value="UniProtKB"/>
</dbReference>
<dbReference type="GO" id="GO:2000234">
    <property type="term" value="P:positive regulation of rRNA processing"/>
    <property type="evidence" value="ECO:0000250"/>
    <property type="project" value="UniProtKB"/>
</dbReference>
<dbReference type="GO" id="GO:0045943">
    <property type="term" value="P:positive regulation of transcription by RNA polymerase I"/>
    <property type="evidence" value="ECO:0000250"/>
    <property type="project" value="UniProtKB"/>
</dbReference>
<dbReference type="GO" id="GO:0006476">
    <property type="term" value="P:protein deacetylation"/>
    <property type="evidence" value="ECO:0000250"/>
    <property type="project" value="UniProtKB"/>
</dbReference>
<dbReference type="GO" id="GO:0061698">
    <property type="term" value="P:protein deglutarylation"/>
    <property type="evidence" value="ECO:0000250"/>
    <property type="project" value="UniProtKB"/>
</dbReference>
<dbReference type="GO" id="GO:0106230">
    <property type="term" value="P:protein depropionylation"/>
    <property type="evidence" value="ECO:0000250"/>
    <property type="project" value="UniProtKB"/>
</dbReference>
<dbReference type="GO" id="GO:0062176">
    <property type="term" value="P:R-loop processing"/>
    <property type="evidence" value="ECO:0000250"/>
    <property type="project" value="UniProtKB"/>
</dbReference>
<dbReference type="GO" id="GO:0010821">
    <property type="term" value="P:regulation of mitochondrion organization"/>
    <property type="evidence" value="ECO:0000250"/>
    <property type="project" value="UniProtKB"/>
</dbReference>
<dbReference type="GO" id="GO:0046825">
    <property type="term" value="P:regulation of protein export from nucleus"/>
    <property type="evidence" value="ECO:0000250"/>
    <property type="project" value="UniProtKB"/>
</dbReference>
<dbReference type="GO" id="GO:0006357">
    <property type="term" value="P:regulation of transcription by RNA polymerase II"/>
    <property type="evidence" value="ECO:0000250"/>
    <property type="project" value="UniProtKB"/>
</dbReference>
<dbReference type="GO" id="GO:1901836">
    <property type="term" value="P:regulation of transcription of nucleolar large rRNA by RNA polymerase I"/>
    <property type="evidence" value="ECO:0000250"/>
    <property type="project" value="UniProtKB"/>
</dbReference>
<dbReference type="GO" id="GO:0009303">
    <property type="term" value="P:rRNA transcription"/>
    <property type="evidence" value="ECO:0000250"/>
    <property type="project" value="UniProtKB"/>
</dbReference>
<dbReference type="GO" id="GO:0010526">
    <property type="term" value="P:transposable element silencing"/>
    <property type="evidence" value="ECO:0000250"/>
    <property type="project" value="UniProtKB"/>
</dbReference>
<dbReference type="CDD" id="cd01410">
    <property type="entry name" value="SIRT7"/>
    <property type="match status" value="1"/>
</dbReference>
<dbReference type="FunFam" id="2.20.28.200:FF:000002">
    <property type="entry name" value="NAD-dependent deacetylase sirtuin-7"/>
    <property type="match status" value="1"/>
</dbReference>
<dbReference type="FunFam" id="3.40.50.1220:FF:000038">
    <property type="entry name" value="NAD-dependent protein deacetylase sirtuin-6 isoform X2"/>
    <property type="match status" value="1"/>
</dbReference>
<dbReference type="Gene3D" id="2.20.28.200">
    <property type="match status" value="1"/>
</dbReference>
<dbReference type="Gene3D" id="3.40.50.1220">
    <property type="entry name" value="TPP-binding domain"/>
    <property type="match status" value="1"/>
</dbReference>
<dbReference type="InterPro" id="IPR029035">
    <property type="entry name" value="DHS-like_NAD/FAD-binding_dom"/>
</dbReference>
<dbReference type="InterPro" id="IPR050134">
    <property type="entry name" value="NAD-dep_sirtuin_deacylases"/>
</dbReference>
<dbReference type="InterPro" id="IPR003000">
    <property type="entry name" value="Sirtuin"/>
</dbReference>
<dbReference type="InterPro" id="IPR026590">
    <property type="entry name" value="Ssirtuin_cat_dom"/>
</dbReference>
<dbReference type="PANTHER" id="PTHR11085:SF1">
    <property type="entry name" value="NAD-DEPENDENT PROTEIN DEACETYLASE SIRTUIN-7"/>
    <property type="match status" value="1"/>
</dbReference>
<dbReference type="PANTHER" id="PTHR11085">
    <property type="entry name" value="NAD-DEPENDENT PROTEIN DEACYLASE SIRTUIN-5, MITOCHONDRIAL-RELATED"/>
    <property type="match status" value="1"/>
</dbReference>
<dbReference type="Pfam" id="PF02146">
    <property type="entry name" value="SIR2"/>
    <property type="match status" value="1"/>
</dbReference>
<dbReference type="SUPFAM" id="SSF52467">
    <property type="entry name" value="DHS-like NAD/FAD-binding domain"/>
    <property type="match status" value="1"/>
</dbReference>
<dbReference type="PROSITE" id="PS50305">
    <property type="entry name" value="SIRTUIN"/>
    <property type="match status" value="1"/>
</dbReference>
<protein>
    <recommendedName>
        <fullName>NAD-dependent protein deacetylase sirtuin-7</fullName>
        <ecNumber evidence="4">2.3.1.286</ecNumber>
    </recommendedName>
    <alternativeName>
        <fullName>NAD-dependent protein deacylase sirtuin-7</fullName>
        <ecNumber evidence="2">2.3.1.-</ecNumber>
    </alternativeName>
    <alternativeName>
        <fullName>Regulatory protein SIR2 homolog 7</fullName>
    </alternativeName>
    <alternativeName>
        <fullName>SIR2-like protein 7</fullName>
    </alternativeName>
</protein>
<comment type="function">
    <text evidence="1 2">NAD-dependent protein-lysine deacylase that can act both as a deacetylase or deacylase (desuccinylase, depropionylase, deglutarylase and dedecanoylase), depending on the context. Specifically mediates deacetylation of histone H3 at 'Lys-18' (H3K18Ac). In contrast to other histone deacetylases, displays strong preference for a specific histone mark, H3K18Ac, directly linked to control of gene expression. H3K18Ac is mainly present around the transcription start site of genes and has been linked to activation of nuclear hormone receptors; SIRT7 thereby acts as a transcription repressor. Moreover, H3K18 hypoacetylation has been reported as a marker of malignancy in various cancers and seems to maintain the transformed phenotype of cancer cells. Also able to mediate deacetylation of histone H3 at 'Lys-36' (H3K36Ac) in the context of nucleosomes. Also mediates deacetylation of non-histone proteins, such as ATM, CDK9, DDX21, DDB1, FBL, FKBP5/FKBP51, GABPB1, RAN, RRP9/U3-55K and POLR1E/PAF53. Enriched in nucleolus where it stimulates transcription activity of the RNA polymerase I complex. Acts by mediating the deacetylation of the RNA polymerase I subunit POLR1E/PAF53, thereby promoting the association of RNA polymerase I with the rDNA promoter region and coding region. In response to metabolic stress, SIRT7 is released from nucleoli leading to hyperacetylation of POLR1E/PAF53 and decreased RNA polymerase I transcription. Required to restore the transcription of ribosomal RNA (rRNA) at the exit from mitosis. Promotes pre-ribosomal RNA (pre-rRNA) cleavage at the 5'-terminal processing site by mediating deacetylation of RRP9/U3-55K, a core subunit of the U3 snoRNP complex. Mediates 'Lys-37' deacetylation of Ran, thereby regulating the nuclear export of NF-kappa-B subunit RELA/p65. Acts as a regulator of DNA damage repair by mediating deacetylation of ATM during the late stages of DNA damage response, promoting ATM dephosphorylation and deactivation. Suppresses the activity of the DCX (DDB1-CUL4-X-box) E3 ubiquitin-protein ligase complexes by mediating deacetylation of DDB1, which prevents the interaction between DDB1 and CUL4 (CUL4A or CUL4B). Activates RNA polymerase II transcription by mediating deacetylation of CDK9, thereby promoting 'Ser-2' phosphorylation of the C-terminal domain (CTD) of RNA polymerase II. Deacetylates FBL, promoting histone-glutamine methyltransferase activity of FBL (By similarity). Acts as a regulator of mitochondrial function by catalyzing deacetylation of GABPB1 (By similarity). Regulates Akt/AKT1 activity by mediating deacetylation of FKBP5/FKBP51. Required to prevent R-loop-associated DNA damage and transcription-associated genomic instability by mediating deacetylation and subsequent activation of DDX21, thereby overcoming R-loop-mediated stalling of RNA polymerases. In addition to protein deacetylase activity, also acts as a protein-lysine deacylase (By similarity). Acts as a protein depropionylase by mediating depropionylation of Osterix (SP7), thereby regulating bone formation by osteoblasts (By similarity). Acts as a histone deglutarylase by mediating deglutarylation of histone H4 on 'Lys-91' (H4K91glu); a mark that destabilizes nucleosomes by promoting dissociation of the H2A-H2B dimers from nucleosomes. Acts as a histone desuccinylase: in response to DNA damage, recruited to DNA double-strand breaks (DSBs) and catalyzes desuccinylation of histone H3 on 'Lys-122' (H3K122succ), thereby promoting chromatin condensation and DSB repair (By similarity). Also promotes DSB repair by promoting H3K18Ac deacetylation, regulating non-homologous end joining (NHEJ). Along with its role in DNA repair, required for chromosome synapsis during prophase I of female meiosis by catalyzing H3K18Ac deacetylation (By similarity). Involved in transcriptional repression of LINE-1 retrotransposon via H3K18Ac deacetylation, and promotes their association with the nuclear lamina. Required to stabilize ribosomal DNA (rDNA) heterochromatin and prevent cellular senescence induced by rDNA instability (By similarity). Acts as a negative regulator of SIRT1 by preventing autodeacetylation of SIRT1, restricting SIRT1 deacetylase activity (By similarity).</text>
</comment>
<comment type="catalytic activity">
    <reaction evidence="2 4">
        <text>N(6)-acetyl-L-lysyl-[protein] + NAD(+) + H2O = 2''-O-acetyl-ADP-D-ribose + nicotinamide + L-lysyl-[protein]</text>
        <dbReference type="Rhea" id="RHEA:43636"/>
        <dbReference type="Rhea" id="RHEA-COMP:9752"/>
        <dbReference type="Rhea" id="RHEA-COMP:10731"/>
        <dbReference type="ChEBI" id="CHEBI:15377"/>
        <dbReference type="ChEBI" id="CHEBI:17154"/>
        <dbReference type="ChEBI" id="CHEBI:29969"/>
        <dbReference type="ChEBI" id="CHEBI:57540"/>
        <dbReference type="ChEBI" id="CHEBI:61930"/>
        <dbReference type="ChEBI" id="CHEBI:83767"/>
        <dbReference type="EC" id="2.3.1.286"/>
    </reaction>
    <physiologicalReaction direction="left-to-right" evidence="2">
        <dbReference type="Rhea" id="RHEA:43637"/>
    </physiologicalReaction>
</comment>
<comment type="catalytic activity">
    <reaction evidence="2">
        <text>N(6)-glutaryl-L-lysyl-[protein] + NAD(+) + H2O = 2''-O-glutaryl-ADP-D-ribose + nicotinamide + L-lysyl-[protein]</text>
        <dbReference type="Rhea" id="RHEA:47664"/>
        <dbReference type="Rhea" id="RHEA-COMP:9752"/>
        <dbReference type="Rhea" id="RHEA-COMP:11875"/>
        <dbReference type="ChEBI" id="CHEBI:15377"/>
        <dbReference type="ChEBI" id="CHEBI:17154"/>
        <dbReference type="ChEBI" id="CHEBI:29969"/>
        <dbReference type="ChEBI" id="CHEBI:57540"/>
        <dbReference type="ChEBI" id="CHEBI:87828"/>
        <dbReference type="ChEBI" id="CHEBI:87829"/>
    </reaction>
    <physiologicalReaction direction="left-to-right" evidence="2">
        <dbReference type="Rhea" id="RHEA:47665"/>
    </physiologicalReaction>
</comment>
<comment type="catalytic activity">
    <reaction evidence="2">
        <text>N(6)-succinyl-L-lysyl-[protein] + NAD(+) + H2O = 2''-O-succinyl-ADP-D-ribose + nicotinamide + L-lysyl-[protein]</text>
        <dbReference type="Rhea" id="RHEA:47668"/>
        <dbReference type="Rhea" id="RHEA-COMP:9752"/>
        <dbReference type="Rhea" id="RHEA-COMP:11877"/>
        <dbReference type="ChEBI" id="CHEBI:15377"/>
        <dbReference type="ChEBI" id="CHEBI:17154"/>
        <dbReference type="ChEBI" id="CHEBI:29969"/>
        <dbReference type="ChEBI" id="CHEBI:57540"/>
        <dbReference type="ChEBI" id="CHEBI:87830"/>
        <dbReference type="ChEBI" id="CHEBI:87832"/>
    </reaction>
    <physiologicalReaction direction="left-to-right" evidence="2">
        <dbReference type="Rhea" id="RHEA:47669"/>
    </physiologicalReaction>
</comment>
<comment type="catalytic activity">
    <reaction evidence="1">
        <text>N(6)-propanoyl-L-lysyl-[protein] + NAD(+) + H2O = 3''-O-propanoyl-ADP-D-ribose + nicotinamide + L-lysyl-[protein]</text>
        <dbReference type="Rhea" id="RHEA:23500"/>
        <dbReference type="Rhea" id="RHEA-COMP:9752"/>
        <dbReference type="Rhea" id="RHEA-COMP:13758"/>
        <dbReference type="ChEBI" id="CHEBI:15377"/>
        <dbReference type="ChEBI" id="CHEBI:17154"/>
        <dbReference type="ChEBI" id="CHEBI:29969"/>
        <dbReference type="ChEBI" id="CHEBI:57540"/>
        <dbReference type="ChEBI" id="CHEBI:138019"/>
        <dbReference type="ChEBI" id="CHEBI:145015"/>
    </reaction>
    <physiologicalReaction direction="left-to-right" evidence="1">
        <dbReference type="Rhea" id="RHEA:23501"/>
    </physiologicalReaction>
</comment>
<comment type="catalytic activity">
    <reaction evidence="2">
        <text>N(6)-decanoyl-L-lysyl-[protein] + NAD(+) + H2O = 2''-O-decanoyl-ADP-D-ribose + nicotinamide + L-lysyl-[protein]</text>
        <dbReference type="Rhea" id="RHEA:70631"/>
        <dbReference type="Rhea" id="RHEA-COMP:9752"/>
        <dbReference type="Rhea" id="RHEA-COMP:17932"/>
        <dbReference type="ChEBI" id="CHEBI:15377"/>
        <dbReference type="ChEBI" id="CHEBI:17154"/>
        <dbReference type="ChEBI" id="CHEBI:29969"/>
        <dbReference type="ChEBI" id="CHEBI:57540"/>
        <dbReference type="ChEBI" id="CHEBI:143222"/>
        <dbReference type="ChEBI" id="CHEBI:189688"/>
    </reaction>
    <physiologicalReaction direction="left-to-right" evidence="2">
        <dbReference type="Rhea" id="RHEA:70632"/>
    </physiologicalReaction>
</comment>
<comment type="cofactor">
    <cofactor evidence="3">
        <name>Zn(2+)</name>
        <dbReference type="ChEBI" id="CHEBI:29105"/>
    </cofactor>
    <text evidence="3">Binds 1 zinc ion per subunit.</text>
</comment>
<comment type="activity regulation">
    <text evidence="2">NAD-dependent protein-lysine deacetylase and deacylase activities are activated by nucleic acids. Histone deacetylase activity is activated by DNA. Protein-lysine deacylase activity is activated by RNA. H3K18Ac histone deacetylase activity is inhibited by methylation at Arg-388. H3K18Ac histone deacetylase activity is inhibited by deubiquitination by USP7.</text>
</comment>
<comment type="subunit">
    <text evidence="1 2">Interacts with UBTF and the RNA polymerase I complex. Interacts with components of the B-WICH complex, such as MYBBP1A, SMARCA5/SNF2H and BAZ1B/WSTF. Interacts with ELK4, leading to stabilization at target promoters for H3K18Ac deacetylation. Interacts with histone H2A and/or histone H2B (By similarity). Interacts with DNMT1. Interacts with SIRT1 (By similarity).</text>
</comment>
<comment type="subcellular location">
    <subcellularLocation>
        <location evidence="2">Nucleus</location>
        <location evidence="2">Nucleolus</location>
    </subcellularLocation>
    <subcellularLocation>
        <location evidence="2">Nucleus</location>
        <location evidence="2">Nucleoplasm</location>
    </subcellularLocation>
    <subcellularLocation>
        <location evidence="2">Chromosome</location>
    </subcellularLocation>
    <subcellularLocation>
        <location evidence="2">Cytoplasm</location>
    </subcellularLocation>
    <text evidence="2">Mainly localizes in the nucleolus and nucleoplasm. Associated with rDNA promoter and transcribed region. Associated with nucleolar organizer regions during mitosis. In response to stress, released from nucleolus to nucleoplasm. Associated with chromatin. In response to DNA damage, recruited to DNA double-strand breaks (DSBs) sites. Located close to the nuclear membrane when in the cytoplasm.</text>
</comment>
<comment type="PTM">
    <text evidence="2">Phosphorylated during mitosis.</text>
</comment>
<comment type="PTM">
    <text evidence="2">Methylation at Arg-388 by PRMT6 inhibits the H3K18Ac histone deacetylase activity, promoting mitochondria biogenesis and maintaining mitochondria respiration.</text>
</comment>
<comment type="PTM">
    <text evidence="2">Ubiquitinated via 'Lys-63'-linked ubiquitin chains. Deubiquitinated by USP7, inhibiting the H3K18Ac histone deacetylase activity and regulating gluconeogenesis. Ubiquitinated by E3 ubiquitin-protein ligase complex containing FBXO7; leading to proteasomal degradation.</text>
</comment>
<comment type="similarity">
    <text evidence="6">Belongs to the sirtuin family. Class IV subfamily.</text>
</comment>
<sequence>MAAGGLSRSERKAAERVRRLREEQQRERLRQVSRILRKAATERSAEEGRLLAESEDLVTELQGRSRRREGLKRRQEEVCDDPEELQRKVRELASAVRNAKYLVVYTGAGISTAASIPDYRGPNGVWTLLQKGRSVSAADLSEAEPTLTHMSITRLHEQKLVQHVVSQNCDGLHLRSGLPRSAMSELHGNMYIEVCTACTPNREYVRVFDVTERTALHRHQTGRTCHKCGGQLRDTIVHFGERGTLGQPLNWEAATEAASKADTILCLGSSLKVLKKYPHLWCMTKPPSRRPKLYIVNLQWTPKDDWAALKLHGKCDDVMQLLMDELGLEIPRYSRWQDPIFSLATPLRAGEEGSHSRKSLCRSREEPGPGDRGAPLSSAPILGGWFGRGCTKRTKRKKVT</sequence>
<evidence type="ECO:0000250" key="1">
    <source>
        <dbReference type="UniProtKB" id="Q8BKJ9"/>
    </source>
</evidence>
<evidence type="ECO:0000250" key="2">
    <source>
        <dbReference type="UniProtKB" id="Q9NRC8"/>
    </source>
</evidence>
<evidence type="ECO:0000250" key="3">
    <source>
        <dbReference type="UniProtKB" id="Q9NXA8"/>
    </source>
</evidence>
<evidence type="ECO:0000255" key="4">
    <source>
        <dbReference type="PROSITE-ProRule" id="PRU00236"/>
    </source>
</evidence>
<evidence type="ECO:0000256" key="5">
    <source>
        <dbReference type="SAM" id="MobiDB-lite"/>
    </source>
</evidence>
<evidence type="ECO:0000305" key="6"/>
<reference key="1">
    <citation type="submission" date="2006-08" db="EMBL/GenBank/DDBJ databases">
        <authorList>
            <consortium name="NIH - Mammalian Gene Collection (MGC) project"/>
        </authorList>
    </citation>
    <scope>NUCLEOTIDE SEQUENCE [LARGE SCALE MRNA]</scope>
    <source>
        <strain>Hereford</strain>
        <tissue>Ascending colon</tissue>
    </source>
</reference>
<gene>
    <name type="primary">SIRT7</name>
</gene>
<feature type="chain" id="PRO_0000260457" description="NAD-dependent protein deacetylase sirtuin-7">
    <location>
        <begin position="1"/>
        <end position="400"/>
    </location>
</feature>
<feature type="domain" description="Deacetylase sirtuin-type" evidence="4">
    <location>
        <begin position="82"/>
        <end position="329"/>
    </location>
</feature>
<feature type="region of interest" description="Disordered" evidence="5">
    <location>
        <begin position="1"/>
        <end position="28"/>
    </location>
</feature>
<feature type="region of interest" description="Disordered" evidence="5">
    <location>
        <begin position="354"/>
        <end position="380"/>
    </location>
</feature>
<feature type="compositionally biased region" description="Basic and acidic residues" evidence="5">
    <location>
        <begin position="8"/>
        <end position="28"/>
    </location>
</feature>
<feature type="active site" description="Proton acceptor" evidence="4">
    <location>
        <position position="187"/>
    </location>
</feature>
<feature type="binding site" evidence="3">
    <location>
        <begin position="107"/>
        <end position="126"/>
    </location>
    <ligand>
        <name>NAD(+)</name>
        <dbReference type="ChEBI" id="CHEBI:57540"/>
    </ligand>
</feature>
<feature type="binding site" evidence="3">
    <location>
        <begin position="167"/>
        <end position="170"/>
    </location>
    <ligand>
        <name>NAD(+)</name>
        <dbReference type="ChEBI" id="CHEBI:57540"/>
    </ligand>
</feature>
<feature type="binding site" evidence="4">
    <location>
        <position position="195"/>
    </location>
    <ligand>
        <name>Zn(2+)</name>
        <dbReference type="ChEBI" id="CHEBI:29105"/>
    </ligand>
</feature>
<feature type="binding site" evidence="4">
    <location>
        <position position="198"/>
    </location>
    <ligand>
        <name>Zn(2+)</name>
        <dbReference type="ChEBI" id="CHEBI:29105"/>
    </ligand>
</feature>
<feature type="binding site" evidence="4">
    <location>
        <position position="225"/>
    </location>
    <ligand>
        <name>Zn(2+)</name>
        <dbReference type="ChEBI" id="CHEBI:29105"/>
    </ligand>
</feature>
<feature type="binding site" evidence="4">
    <location>
        <position position="228"/>
    </location>
    <ligand>
        <name>Zn(2+)</name>
        <dbReference type="ChEBI" id="CHEBI:29105"/>
    </ligand>
</feature>
<feature type="binding site" evidence="3">
    <location>
        <begin position="268"/>
        <end position="270"/>
    </location>
    <ligand>
        <name>NAD(+)</name>
        <dbReference type="ChEBI" id="CHEBI:57540"/>
    </ligand>
</feature>
<feature type="binding site" evidence="3">
    <location>
        <begin position="297"/>
        <end position="299"/>
    </location>
    <ligand>
        <name>NAD(+)</name>
        <dbReference type="ChEBI" id="CHEBI:57540"/>
    </ligand>
</feature>
<feature type="binding site" evidence="3">
    <location>
        <position position="315"/>
    </location>
    <ligand>
        <name>NAD(+)</name>
        <dbReference type="ChEBI" id="CHEBI:57540"/>
    </ligand>
</feature>
<feature type="modified residue" description="Asymmetric dimethylarginine; alternate" evidence="2">
    <location>
        <position position="388"/>
    </location>
</feature>
<feature type="modified residue" description="Omega-N-methylarginine; alternate" evidence="2">
    <location>
        <position position="388"/>
    </location>
</feature>
<organism>
    <name type="scientific">Bos taurus</name>
    <name type="common">Bovine</name>
    <dbReference type="NCBI Taxonomy" id="9913"/>
    <lineage>
        <taxon>Eukaryota</taxon>
        <taxon>Metazoa</taxon>
        <taxon>Chordata</taxon>
        <taxon>Craniata</taxon>
        <taxon>Vertebrata</taxon>
        <taxon>Euteleostomi</taxon>
        <taxon>Mammalia</taxon>
        <taxon>Eutheria</taxon>
        <taxon>Laurasiatheria</taxon>
        <taxon>Artiodactyla</taxon>
        <taxon>Ruminantia</taxon>
        <taxon>Pecora</taxon>
        <taxon>Bovidae</taxon>
        <taxon>Bovinae</taxon>
        <taxon>Bos</taxon>
    </lineage>
</organism>
<accession>Q0P595</accession>
<keyword id="KW-0156">Chromatin regulator</keyword>
<keyword id="KW-0158">Chromosome</keyword>
<keyword id="KW-0963">Cytoplasm</keyword>
<keyword id="KW-0227">DNA damage</keyword>
<keyword id="KW-0234">DNA repair</keyword>
<keyword id="KW-0479">Metal-binding</keyword>
<keyword id="KW-0488">Methylation</keyword>
<keyword id="KW-0520">NAD</keyword>
<keyword id="KW-0539">Nucleus</keyword>
<keyword id="KW-0597">Phosphoprotein</keyword>
<keyword id="KW-1185">Reference proteome</keyword>
<keyword id="KW-0678">Repressor</keyword>
<keyword id="KW-0804">Transcription</keyword>
<keyword id="KW-0805">Transcription regulation</keyword>
<keyword id="KW-0808">Transferase</keyword>
<keyword id="KW-0832">Ubl conjugation</keyword>
<keyword id="KW-0862">Zinc</keyword>
<proteinExistence type="evidence at transcript level"/>